<proteinExistence type="inferred from homology"/>
<evidence type="ECO:0000305" key="1"/>
<comment type="catalytic activity">
    <reaction>
        <text>L-serine + acetyl-CoA = O-acetyl-L-serine + CoA</text>
        <dbReference type="Rhea" id="RHEA:24560"/>
        <dbReference type="ChEBI" id="CHEBI:33384"/>
        <dbReference type="ChEBI" id="CHEBI:57287"/>
        <dbReference type="ChEBI" id="CHEBI:57288"/>
        <dbReference type="ChEBI" id="CHEBI:58340"/>
        <dbReference type="EC" id="2.3.1.30"/>
    </reaction>
</comment>
<comment type="pathway">
    <text>Amino-acid biosynthesis; L-cysteine biosynthesis; L-cysteine from L-serine: step 1/2.</text>
</comment>
<comment type="subcellular location">
    <subcellularLocation>
        <location>Cytoplasm</location>
    </subcellularLocation>
</comment>
<comment type="similarity">
    <text evidence="1">Belongs to the transferase hexapeptide repeat family.</text>
</comment>
<organism>
    <name type="scientific">Staphylococcus aureus (strain MW2)</name>
    <dbReference type="NCBI Taxonomy" id="196620"/>
    <lineage>
        <taxon>Bacteria</taxon>
        <taxon>Bacillati</taxon>
        <taxon>Bacillota</taxon>
        <taxon>Bacilli</taxon>
        <taxon>Bacillales</taxon>
        <taxon>Staphylococcaceae</taxon>
        <taxon>Staphylococcus</taxon>
    </lineage>
</organism>
<keyword id="KW-0012">Acyltransferase</keyword>
<keyword id="KW-0028">Amino-acid biosynthesis</keyword>
<keyword id="KW-0198">Cysteine biosynthesis</keyword>
<keyword id="KW-0963">Cytoplasm</keyword>
<keyword id="KW-0677">Repeat</keyword>
<keyword id="KW-0808">Transferase</keyword>
<feature type="chain" id="PRO_0000068682" description="Serine acetyltransferase">
    <location>
        <begin position="1"/>
        <end position="213"/>
    </location>
</feature>
<sequence length="213" mass="23528">MLKRMRDDIKMVFEQDPAARSTLEVITTYAGLHAVWSHLIAHKLYNQKKYVAARAISQISRFFTGIEIHPGAKIGKRLFIDHGMGVVIGETCTIGDNVTIYQGVTLGGTGKERGKRHPDIGDNVLIAAGAKVLGNIKINSNVNIGANSVVLQSVPSYSTVVGIPGHIVKQDGVRVGKTFDHRHLPDPIYEQIKHLERQLEKTRNGEIQDDYII</sequence>
<dbReference type="EC" id="2.3.1.30"/>
<dbReference type="EMBL" id="BA000033">
    <property type="protein sequence ID" value="BAB94349.1"/>
    <property type="molecule type" value="Genomic_DNA"/>
</dbReference>
<dbReference type="SMR" id="P67766"/>
<dbReference type="KEGG" id="sam:MW0484"/>
<dbReference type="HOGENOM" id="CLU_051638_10_0_9"/>
<dbReference type="UniPathway" id="UPA00136">
    <property type="reaction ID" value="UER00199"/>
</dbReference>
<dbReference type="GO" id="GO:0005737">
    <property type="term" value="C:cytoplasm"/>
    <property type="evidence" value="ECO:0007669"/>
    <property type="project" value="UniProtKB-SubCell"/>
</dbReference>
<dbReference type="GO" id="GO:0009001">
    <property type="term" value="F:serine O-acetyltransferase activity"/>
    <property type="evidence" value="ECO:0007669"/>
    <property type="project" value="UniProtKB-EC"/>
</dbReference>
<dbReference type="GO" id="GO:0006535">
    <property type="term" value="P:cysteine biosynthetic process from serine"/>
    <property type="evidence" value="ECO:0007669"/>
    <property type="project" value="InterPro"/>
</dbReference>
<dbReference type="CDD" id="cd03354">
    <property type="entry name" value="LbH_SAT"/>
    <property type="match status" value="1"/>
</dbReference>
<dbReference type="FunFam" id="1.10.3130.10:FF:000002">
    <property type="entry name" value="Serine acetyltransferase"/>
    <property type="match status" value="1"/>
</dbReference>
<dbReference type="FunFam" id="2.160.10.10:FF:000007">
    <property type="entry name" value="Serine acetyltransferase"/>
    <property type="match status" value="1"/>
</dbReference>
<dbReference type="Gene3D" id="2.160.10.10">
    <property type="entry name" value="Hexapeptide repeat proteins"/>
    <property type="match status" value="1"/>
</dbReference>
<dbReference type="Gene3D" id="1.10.3130.10">
    <property type="entry name" value="serine acetyltransferase, domain 1"/>
    <property type="match status" value="1"/>
</dbReference>
<dbReference type="InterPro" id="IPR001451">
    <property type="entry name" value="Hexapep"/>
</dbReference>
<dbReference type="InterPro" id="IPR045304">
    <property type="entry name" value="LbH_SAT"/>
</dbReference>
<dbReference type="InterPro" id="IPR042122">
    <property type="entry name" value="Ser_AcTrfase_N_sf"/>
</dbReference>
<dbReference type="InterPro" id="IPR005881">
    <property type="entry name" value="Ser_O-AcTrfase"/>
</dbReference>
<dbReference type="InterPro" id="IPR053376">
    <property type="entry name" value="Serine_acetyltransferase"/>
</dbReference>
<dbReference type="InterPro" id="IPR011004">
    <property type="entry name" value="Trimer_LpxA-like_sf"/>
</dbReference>
<dbReference type="NCBIfam" id="TIGR01172">
    <property type="entry name" value="cysE"/>
    <property type="match status" value="1"/>
</dbReference>
<dbReference type="NCBIfam" id="NF041874">
    <property type="entry name" value="EPS_EpsC"/>
    <property type="match status" value="1"/>
</dbReference>
<dbReference type="PANTHER" id="PTHR42811">
    <property type="entry name" value="SERINE ACETYLTRANSFERASE"/>
    <property type="match status" value="1"/>
</dbReference>
<dbReference type="Pfam" id="PF00132">
    <property type="entry name" value="Hexapep"/>
    <property type="match status" value="1"/>
</dbReference>
<dbReference type="PIRSF" id="PIRSF000441">
    <property type="entry name" value="CysE"/>
    <property type="match status" value="1"/>
</dbReference>
<dbReference type="SUPFAM" id="SSF51161">
    <property type="entry name" value="Trimeric LpxA-like enzymes"/>
    <property type="match status" value="1"/>
</dbReference>
<name>CYSE_STAAW</name>
<reference key="1">
    <citation type="journal article" date="2002" name="Lancet">
        <title>Genome and virulence determinants of high virulence community-acquired MRSA.</title>
        <authorList>
            <person name="Baba T."/>
            <person name="Takeuchi F."/>
            <person name="Kuroda M."/>
            <person name="Yuzawa H."/>
            <person name="Aoki K."/>
            <person name="Oguchi A."/>
            <person name="Nagai Y."/>
            <person name="Iwama N."/>
            <person name="Asano K."/>
            <person name="Naimi T."/>
            <person name="Kuroda H."/>
            <person name="Cui L."/>
            <person name="Yamamoto K."/>
            <person name="Hiramatsu K."/>
        </authorList>
    </citation>
    <scope>NUCLEOTIDE SEQUENCE [LARGE SCALE GENOMIC DNA]</scope>
    <source>
        <strain>MW2</strain>
    </source>
</reference>
<protein>
    <recommendedName>
        <fullName>Serine acetyltransferase</fullName>
        <shortName>SAT</shortName>
        <ecNumber>2.3.1.30</ecNumber>
    </recommendedName>
</protein>
<accession>P67766</accession>
<accession>Q99W74</accession>
<gene>
    <name type="primary">cysE</name>
    <name type="ordered locus">MW0484</name>
</gene>